<dbReference type="EC" id="3.4.21.89" evidence="2"/>
<dbReference type="EMBL" id="AAFI02000014">
    <property type="protein sequence ID" value="EAL69260.1"/>
    <property type="molecule type" value="Genomic_DNA"/>
</dbReference>
<dbReference type="RefSeq" id="XP_643198.1">
    <property type="nucleotide sequence ID" value="XM_638106.1"/>
</dbReference>
<dbReference type="SMR" id="Q86JD4"/>
<dbReference type="FunCoup" id="Q86JD4">
    <property type="interactions" value="556"/>
</dbReference>
<dbReference type="STRING" id="44689.Q86JD4"/>
<dbReference type="MEROPS" id="S26.010"/>
<dbReference type="PaxDb" id="44689-DDB0237791"/>
<dbReference type="EnsemblProtists" id="EAL69260">
    <property type="protein sequence ID" value="EAL69260"/>
    <property type="gene ID" value="DDB_G0276359"/>
</dbReference>
<dbReference type="GeneID" id="8620472"/>
<dbReference type="KEGG" id="ddi:DDB_G0276359"/>
<dbReference type="dictyBase" id="DDB_G0276359">
    <property type="gene designation" value="sec11"/>
</dbReference>
<dbReference type="VEuPathDB" id="AmoebaDB:DDB_G0276359"/>
<dbReference type="eggNOG" id="KOG3342">
    <property type="taxonomic scope" value="Eukaryota"/>
</dbReference>
<dbReference type="HOGENOM" id="CLU_089996_0_0_1"/>
<dbReference type="InParanoid" id="Q86JD4"/>
<dbReference type="OMA" id="ILMNEYP"/>
<dbReference type="PhylomeDB" id="Q86JD4"/>
<dbReference type="PRO" id="PR:Q86JD4"/>
<dbReference type="Proteomes" id="UP000002195">
    <property type="component" value="Chromosome 2"/>
</dbReference>
<dbReference type="GO" id="GO:0005787">
    <property type="term" value="C:signal peptidase complex"/>
    <property type="evidence" value="ECO:0000250"/>
    <property type="project" value="dictyBase"/>
</dbReference>
<dbReference type="GO" id="GO:0008233">
    <property type="term" value="F:peptidase activity"/>
    <property type="evidence" value="ECO:0000250"/>
    <property type="project" value="dictyBase"/>
</dbReference>
<dbReference type="GO" id="GO:0004252">
    <property type="term" value="F:serine-type endopeptidase activity"/>
    <property type="evidence" value="ECO:0007669"/>
    <property type="project" value="UniProtKB-EC"/>
</dbReference>
<dbReference type="GO" id="GO:0006465">
    <property type="term" value="P:signal peptide processing"/>
    <property type="evidence" value="ECO:0000250"/>
    <property type="project" value="dictyBase"/>
</dbReference>
<dbReference type="CDD" id="cd06462">
    <property type="entry name" value="Peptidase_S24_S26"/>
    <property type="match status" value="1"/>
</dbReference>
<dbReference type="FunFam" id="2.10.109.10:FF:000003">
    <property type="entry name" value="Signal peptidase complex catalytic subunit SEC11"/>
    <property type="match status" value="1"/>
</dbReference>
<dbReference type="InterPro" id="IPR036286">
    <property type="entry name" value="LexA/Signal_pep-like_sf"/>
</dbReference>
<dbReference type="InterPro" id="IPR015927">
    <property type="entry name" value="Peptidase_S24_S26A/B/C"/>
</dbReference>
<dbReference type="InterPro" id="IPR001733">
    <property type="entry name" value="Peptidase_S26B"/>
</dbReference>
<dbReference type="NCBIfam" id="TIGR02228">
    <property type="entry name" value="sigpep_I_arch"/>
    <property type="match status" value="1"/>
</dbReference>
<dbReference type="PANTHER" id="PTHR10806">
    <property type="entry name" value="SIGNAL PEPTIDASE COMPLEX CATALYTIC SUBUNIT SEC11"/>
    <property type="match status" value="1"/>
</dbReference>
<dbReference type="PANTHER" id="PTHR10806:SF6">
    <property type="entry name" value="SIGNAL PEPTIDASE COMPLEX CATALYTIC SUBUNIT SEC11"/>
    <property type="match status" value="1"/>
</dbReference>
<dbReference type="Pfam" id="PF00717">
    <property type="entry name" value="Peptidase_S24"/>
    <property type="match status" value="1"/>
</dbReference>
<dbReference type="PRINTS" id="PR00728">
    <property type="entry name" value="SIGNALPTASE"/>
</dbReference>
<dbReference type="SUPFAM" id="SSF51306">
    <property type="entry name" value="LexA/Signal peptidase"/>
    <property type="match status" value="1"/>
</dbReference>
<dbReference type="PROSITE" id="PS00501">
    <property type="entry name" value="SPASE_I_1"/>
    <property type="match status" value="1"/>
</dbReference>
<sequence length="179" mass="20145">MNDIISKINPFSSIPKHQIAQQIVNFGLIVATALMIWKGLMIFSGSESPIVVVLSGSMIPAFFRGDLLYLNMEDGPFRVGEIVVFKIEGKEIPIVHRILQIHEKEDGLYDIRTKGDNNNVDDVGLYSPGQRWLSRDHIIGRAKGFLPSVGMVTIVMHDYPQLKFFLVFVLAVFVLSTRE</sequence>
<name>SEC11_DICDI</name>
<comment type="function">
    <text evidence="2">Catalytic component of the signal peptidase complex (SPC) which catalyzes the cleavage of N-terminal signal sequences from nascent proteins as they are translocated into the lumen of the endoplasmic reticulum. Specifically cleaves N-terminal signal peptides that contain a hydrophobic alpha-helix (h-region) shorter than 18-20 amino acids.</text>
</comment>
<comment type="catalytic activity">
    <reaction evidence="2">
        <text>Cleavage of hydrophobic, N-terminal signal or leader sequences from secreted and periplasmic proteins.</text>
        <dbReference type="EC" id="3.4.21.89"/>
    </reaction>
</comment>
<comment type="subunit">
    <text evidence="2">Component of the signal peptidase complex (SPC) composed of a catalytic subunit sec11 and three accessory subunits spcs1, spcs2 and spcs3. The complex induces a local thinning of the ER membrane which is used to measure the length of the signal peptide (SP) h-region of protein substrates. This ensures the selectivity of the complex towards h-regions shorter than 18-20 amino acids.</text>
</comment>
<comment type="subcellular location">
    <subcellularLocation>
        <location evidence="1">Endoplasmic reticulum membrane</location>
        <topology evidence="1">Single-pass type II membrane protein</topology>
    </subcellularLocation>
</comment>
<comment type="domain">
    <text evidence="2">The C-terminal short (CTS) helix is essential for catalytic activity. It may be accommodated as a transmembrane helix in the thinned membrane environment of the complex, similarly to the signal peptide in the complex substrates.</text>
</comment>
<comment type="similarity">
    <text evidence="4">Belongs to the peptidase S26B family.</text>
</comment>
<organism>
    <name type="scientific">Dictyostelium discoideum</name>
    <name type="common">Social amoeba</name>
    <dbReference type="NCBI Taxonomy" id="44689"/>
    <lineage>
        <taxon>Eukaryota</taxon>
        <taxon>Amoebozoa</taxon>
        <taxon>Evosea</taxon>
        <taxon>Eumycetozoa</taxon>
        <taxon>Dictyostelia</taxon>
        <taxon>Dictyosteliales</taxon>
        <taxon>Dictyosteliaceae</taxon>
        <taxon>Dictyostelium</taxon>
    </lineage>
</organism>
<evidence type="ECO:0000250" key="1">
    <source>
        <dbReference type="UniProtKB" id="P67811"/>
    </source>
</evidence>
<evidence type="ECO:0000250" key="2">
    <source>
        <dbReference type="UniProtKB" id="P67812"/>
    </source>
</evidence>
<evidence type="ECO:0000255" key="3"/>
<evidence type="ECO:0000305" key="4"/>
<keyword id="KW-0256">Endoplasmic reticulum</keyword>
<keyword id="KW-0378">Hydrolase</keyword>
<keyword id="KW-0472">Membrane</keyword>
<keyword id="KW-0645">Protease</keyword>
<keyword id="KW-1185">Reference proteome</keyword>
<keyword id="KW-0735">Signal-anchor</keyword>
<keyword id="KW-0812">Transmembrane</keyword>
<keyword id="KW-1133">Transmembrane helix</keyword>
<feature type="chain" id="PRO_0000330653" description="Signal peptidase complex catalytic subunit sec11">
    <location>
        <begin position="1"/>
        <end position="179"/>
    </location>
</feature>
<feature type="topological domain" description="Cytoplasmic" evidence="1">
    <location>
        <begin position="1"/>
        <end position="22"/>
    </location>
</feature>
<feature type="transmembrane region" description="Helical; Signal-anchor for type II membrane protein" evidence="3">
    <location>
        <begin position="23"/>
        <end position="43"/>
    </location>
</feature>
<feature type="topological domain" description="Lumenal" evidence="1">
    <location>
        <begin position="44"/>
        <end position="179"/>
    </location>
</feature>
<feature type="region of interest" description="C-terminal short (CTS) helix" evidence="2">
    <location>
        <begin position="165"/>
        <end position="176"/>
    </location>
</feature>
<feature type="active site" description="Charge relay system" evidence="2">
    <location>
        <position position="57"/>
    </location>
</feature>
<feature type="active site" description="Charge relay system" evidence="2">
    <location>
        <position position="96"/>
    </location>
</feature>
<feature type="active site" description="Charge relay system" evidence="2">
    <location>
        <position position="122"/>
    </location>
</feature>
<reference key="1">
    <citation type="journal article" date="2002" name="Nature">
        <title>Sequence and analysis of chromosome 2 of Dictyostelium discoideum.</title>
        <authorList>
            <person name="Gloeckner G."/>
            <person name="Eichinger L."/>
            <person name="Szafranski K."/>
            <person name="Pachebat J.A."/>
            <person name="Bankier A.T."/>
            <person name="Dear P.H."/>
            <person name="Lehmann R."/>
            <person name="Baumgart C."/>
            <person name="Parra G."/>
            <person name="Abril J.F."/>
            <person name="Guigo R."/>
            <person name="Kumpf K."/>
            <person name="Tunggal B."/>
            <person name="Cox E.C."/>
            <person name="Quail M.A."/>
            <person name="Platzer M."/>
            <person name="Rosenthal A."/>
            <person name="Noegel A.A."/>
        </authorList>
    </citation>
    <scope>NUCLEOTIDE SEQUENCE [LARGE SCALE GENOMIC DNA]</scope>
    <source>
        <strain>AX4</strain>
    </source>
</reference>
<reference key="2">
    <citation type="journal article" date="2005" name="Nature">
        <title>The genome of the social amoeba Dictyostelium discoideum.</title>
        <authorList>
            <person name="Eichinger L."/>
            <person name="Pachebat J.A."/>
            <person name="Gloeckner G."/>
            <person name="Rajandream M.A."/>
            <person name="Sucgang R."/>
            <person name="Berriman M."/>
            <person name="Song J."/>
            <person name="Olsen R."/>
            <person name="Szafranski K."/>
            <person name="Xu Q."/>
            <person name="Tunggal B."/>
            <person name="Kummerfeld S."/>
            <person name="Madera M."/>
            <person name="Konfortov B.A."/>
            <person name="Rivero F."/>
            <person name="Bankier A.T."/>
            <person name="Lehmann R."/>
            <person name="Hamlin N."/>
            <person name="Davies R."/>
            <person name="Gaudet P."/>
            <person name="Fey P."/>
            <person name="Pilcher K."/>
            <person name="Chen G."/>
            <person name="Saunders D."/>
            <person name="Sodergren E.J."/>
            <person name="Davis P."/>
            <person name="Kerhornou A."/>
            <person name="Nie X."/>
            <person name="Hall N."/>
            <person name="Anjard C."/>
            <person name="Hemphill L."/>
            <person name="Bason N."/>
            <person name="Farbrother P."/>
            <person name="Desany B."/>
            <person name="Just E."/>
            <person name="Morio T."/>
            <person name="Rost R."/>
            <person name="Churcher C.M."/>
            <person name="Cooper J."/>
            <person name="Haydock S."/>
            <person name="van Driessche N."/>
            <person name="Cronin A."/>
            <person name="Goodhead I."/>
            <person name="Muzny D.M."/>
            <person name="Mourier T."/>
            <person name="Pain A."/>
            <person name="Lu M."/>
            <person name="Harper D."/>
            <person name="Lindsay R."/>
            <person name="Hauser H."/>
            <person name="James K.D."/>
            <person name="Quiles M."/>
            <person name="Madan Babu M."/>
            <person name="Saito T."/>
            <person name="Buchrieser C."/>
            <person name="Wardroper A."/>
            <person name="Felder M."/>
            <person name="Thangavelu M."/>
            <person name="Johnson D."/>
            <person name="Knights A."/>
            <person name="Loulseged H."/>
            <person name="Mungall K.L."/>
            <person name="Oliver K."/>
            <person name="Price C."/>
            <person name="Quail M.A."/>
            <person name="Urushihara H."/>
            <person name="Hernandez J."/>
            <person name="Rabbinowitsch E."/>
            <person name="Steffen D."/>
            <person name="Sanders M."/>
            <person name="Ma J."/>
            <person name="Kohara Y."/>
            <person name="Sharp S."/>
            <person name="Simmonds M.N."/>
            <person name="Spiegler S."/>
            <person name="Tivey A."/>
            <person name="Sugano S."/>
            <person name="White B."/>
            <person name="Walker D."/>
            <person name="Woodward J.R."/>
            <person name="Winckler T."/>
            <person name="Tanaka Y."/>
            <person name="Shaulsky G."/>
            <person name="Schleicher M."/>
            <person name="Weinstock G.M."/>
            <person name="Rosenthal A."/>
            <person name="Cox E.C."/>
            <person name="Chisholm R.L."/>
            <person name="Gibbs R.A."/>
            <person name="Loomis W.F."/>
            <person name="Platzer M."/>
            <person name="Kay R.R."/>
            <person name="Williams J.G."/>
            <person name="Dear P.H."/>
            <person name="Noegel A.A."/>
            <person name="Barrell B.G."/>
            <person name="Kuspa A."/>
        </authorList>
    </citation>
    <scope>NUCLEOTIDE SEQUENCE [LARGE SCALE GENOMIC DNA]</scope>
    <source>
        <strain>AX4</strain>
    </source>
</reference>
<protein>
    <recommendedName>
        <fullName>Signal peptidase complex catalytic subunit sec11</fullName>
        <ecNumber evidence="2">3.4.21.89</ecNumber>
    </recommendedName>
</protein>
<proteinExistence type="inferred from homology"/>
<gene>
    <name type="primary">sec11</name>
    <name type="ORF">DDB_G0276359</name>
</gene>
<accession>Q86JD4</accession>
<accession>Q551R3</accession>